<sequence>MARKKEFKYRGYTFEELINMSLEDLSKLLPSRQRRSLKRGLTPEQKKLLRKIRLAKKGKYKKPIRTHSRDMVILPEMVGMMIYVHNGKEFVPVQIREEMIGHYIGEFALTRKRVQHGSPGVGATRSSMFVAIK</sequence>
<proteinExistence type="inferred from homology"/>
<reference key="1">
    <citation type="journal article" date="2009" name="Appl. Environ. Microbiol.">
        <title>Metabolic versatility and indigenous origin of the archaeon Thermococcus sibiricus, isolated from a siberian oil reservoir, as revealed by genome analysis.</title>
        <authorList>
            <person name="Mardanov A.V."/>
            <person name="Ravin N.V."/>
            <person name="Svetlitchnyi V.A."/>
            <person name="Beletsky A.V."/>
            <person name="Miroshnichenko M.L."/>
            <person name="Bonch-Osmolovskaya E.A."/>
            <person name="Skryabin K.G."/>
        </authorList>
    </citation>
    <scope>NUCLEOTIDE SEQUENCE [LARGE SCALE GENOMIC DNA]</scope>
    <source>
        <strain>DSM 12597 / MM 739</strain>
    </source>
</reference>
<protein>
    <recommendedName>
        <fullName evidence="1">Small ribosomal subunit protein uS19</fullName>
    </recommendedName>
    <alternativeName>
        <fullName evidence="2">30S ribosomal protein S19</fullName>
    </alternativeName>
</protein>
<accession>C6A163</accession>
<name>RS19_THESM</name>
<feature type="chain" id="PRO_1000211822" description="Small ribosomal subunit protein uS19">
    <location>
        <begin position="1"/>
        <end position="133"/>
    </location>
</feature>
<comment type="function">
    <text evidence="1">Protein S19 forms a complex with S13 that binds strongly to the 16S ribosomal RNA.</text>
</comment>
<comment type="similarity">
    <text evidence="1">Belongs to the universal ribosomal protein uS19 family.</text>
</comment>
<gene>
    <name evidence="1" type="primary">rps19</name>
    <name type="ordered locus">TSIB_0292</name>
</gene>
<dbReference type="EMBL" id="CP001463">
    <property type="protein sequence ID" value="ACS89358.1"/>
    <property type="molecule type" value="Genomic_DNA"/>
</dbReference>
<dbReference type="RefSeq" id="WP_015848578.1">
    <property type="nucleotide sequence ID" value="NC_012883.1"/>
</dbReference>
<dbReference type="SMR" id="C6A163"/>
<dbReference type="STRING" id="604354.TSIB_0292"/>
<dbReference type="GeneID" id="8095265"/>
<dbReference type="KEGG" id="tsi:TSIB_0292"/>
<dbReference type="eggNOG" id="arCOG04099">
    <property type="taxonomic scope" value="Archaea"/>
</dbReference>
<dbReference type="HOGENOM" id="CLU_097347_1_1_2"/>
<dbReference type="OrthoDB" id="30559at2157"/>
<dbReference type="Proteomes" id="UP000009079">
    <property type="component" value="Chromosome"/>
</dbReference>
<dbReference type="GO" id="GO:0022627">
    <property type="term" value="C:cytosolic small ribosomal subunit"/>
    <property type="evidence" value="ECO:0007669"/>
    <property type="project" value="TreeGrafter"/>
</dbReference>
<dbReference type="GO" id="GO:0019843">
    <property type="term" value="F:rRNA binding"/>
    <property type="evidence" value="ECO:0007669"/>
    <property type="project" value="UniProtKB-UniRule"/>
</dbReference>
<dbReference type="GO" id="GO:0003735">
    <property type="term" value="F:structural constituent of ribosome"/>
    <property type="evidence" value="ECO:0007669"/>
    <property type="project" value="InterPro"/>
</dbReference>
<dbReference type="GO" id="GO:0000028">
    <property type="term" value="P:ribosomal small subunit assembly"/>
    <property type="evidence" value="ECO:0007669"/>
    <property type="project" value="TreeGrafter"/>
</dbReference>
<dbReference type="GO" id="GO:0006412">
    <property type="term" value="P:translation"/>
    <property type="evidence" value="ECO:0007669"/>
    <property type="project" value="UniProtKB-UniRule"/>
</dbReference>
<dbReference type="FunFam" id="3.30.860.10:FF:000002">
    <property type="entry name" value="40S ribosomal protein S15"/>
    <property type="match status" value="1"/>
</dbReference>
<dbReference type="Gene3D" id="3.30.860.10">
    <property type="entry name" value="30s Ribosomal Protein S19, Chain A"/>
    <property type="match status" value="1"/>
</dbReference>
<dbReference type="HAMAP" id="MF_00531">
    <property type="entry name" value="Ribosomal_uS19"/>
    <property type="match status" value="1"/>
</dbReference>
<dbReference type="InterPro" id="IPR002222">
    <property type="entry name" value="Ribosomal_uS19"/>
</dbReference>
<dbReference type="InterPro" id="IPR020934">
    <property type="entry name" value="Ribosomal_uS19_CS"/>
</dbReference>
<dbReference type="InterPro" id="IPR005713">
    <property type="entry name" value="Ribosomal_uS19_euk/arc"/>
</dbReference>
<dbReference type="InterPro" id="IPR023575">
    <property type="entry name" value="Ribosomal_uS19_SF"/>
</dbReference>
<dbReference type="NCBIfam" id="NF003121">
    <property type="entry name" value="PRK04038.1"/>
    <property type="match status" value="1"/>
</dbReference>
<dbReference type="NCBIfam" id="TIGR01025">
    <property type="entry name" value="uS19_arch"/>
    <property type="match status" value="1"/>
</dbReference>
<dbReference type="PANTHER" id="PTHR11880">
    <property type="entry name" value="RIBOSOMAL PROTEIN S19P FAMILY MEMBER"/>
    <property type="match status" value="1"/>
</dbReference>
<dbReference type="PANTHER" id="PTHR11880:SF2">
    <property type="entry name" value="SMALL RIBOSOMAL SUBUNIT PROTEIN US19"/>
    <property type="match status" value="1"/>
</dbReference>
<dbReference type="Pfam" id="PF00203">
    <property type="entry name" value="Ribosomal_S19"/>
    <property type="match status" value="1"/>
</dbReference>
<dbReference type="PIRSF" id="PIRSF002144">
    <property type="entry name" value="Ribosomal_S19"/>
    <property type="match status" value="1"/>
</dbReference>
<dbReference type="PRINTS" id="PR00975">
    <property type="entry name" value="RIBOSOMALS19"/>
</dbReference>
<dbReference type="SUPFAM" id="SSF54570">
    <property type="entry name" value="Ribosomal protein S19"/>
    <property type="match status" value="1"/>
</dbReference>
<dbReference type="PROSITE" id="PS00323">
    <property type="entry name" value="RIBOSOMAL_S19"/>
    <property type="match status" value="1"/>
</dbReference>
<organism>
    <name type="scientific">Thermococcus sibiricus (strain DSM 12597 / MM 739)</name>
    <dbReference type="NCBI Taxonomy" id="604354"/>
    <lineage>
        <taxon>Archaea</taxon>
        <taxon>Methanobacteriati</taxon>
        <taxon>Methanobacteriota</taxon>
        <taxon>Thermococci</taxon>
        <taxon>Thermococcales</taxon>
        <taxon>Thermococcaceae</taxon>
        <taxon>Thermococcus</taxon>
    </lineage>
</organism>
<keyword id="KW-1185">Reference proteome</keyword>
<keyword id="KW-0687">Ribonucleoprotein</keyword>
<keyword id="KW-0689">Ribosomal protein</keyword>
<keyword id="KW-0694">RNA-binding</keyword>
<keyword id="KW-0699">rRNA-binding</keyword>
<evidence type="ECO:0000255" key="1">
    <source>
        <dbReference type="HAMAP-Rule" id="MF_00531"/>
    </source>
</evidence>
<evidence type="ECO:0000305" key="2"/>